<protein>
    <recommendedName>
        <fullName evidence="1">Ketol-acid reductoisomerase (NADP(+))</fullName>
        <shortName evidence="1">KARI</shortName>
        <ecNumber evidence="1">1.1.1.86</ecNumber>
    </recommendedName>
    <alternativeName>
        <fullName evidence="1">Acetohydroxy-acid isomeroreductase</fullName>
        <shortName evidence="1">AHIR</shortName>
    </alternativeName>
    <alternativeName>
        <fullName evidence="1">Alpha-keto-beta-hydroxylacyl reductoisomerase</fullName>
    </alternativeName>
    <alternativeName>
        <fullName evidence="1">Ketol-acid reductoisomerase type 1</fullName>
    </alternativeName>
    <alternativeName>
        <fullName evidence="1">Ketol-acid reductoisomerase type I</fullName>
    </alternativeName>
</protein>
<dbReference type="EC" id="1.1.1.86" evidence="1"/>
<dbReference type="EMBL" id="AE001439">
    <property type="protein sequence ID" value="AAD05913.1"/>
    <property type="molecule type" value="Genomic_DNA"/>
</dbReference>
<dbReference type="PIR" id="A71945">
    <property type="entry name" value="A71945"/>
</dbReference>
<dbReference type="RefSeq" id="WP_001207810.1">
    <property type="nucleotide sequence ID" value="NC_000921.1"/>
</dbReference>
<dbReference type="SMR" id="Q9ZMA9"/>
<dbReference type="IntAct" id="Q9ZMA9">
    <property type="interactions" value="1"/>
</dbReference>
<dbReference type="KEGG" id="hpj:jhp_0313"/>
<dbReference type="PATRIC" id="fig|85963.30.peg.700"/>
<dbReference type="eggNOG" id="COG0059">
    <property type="taxonomic scope" value="Bacteria"/>
</dbReference>
<dbReference type="UniPathway" id="UPA00047">
    <property type="reaction ID" value="UER00056"/>
</dbReference>
<dbReference type="UniPathway" id="UPA00049">
    <property type="reaction ID" value="UER00060"/>
</dbReference>
<dbReference type="Proteomes" id="UP000000804">
    <property type="component" value="Chromosome"/>
</dbReference>
<dbReference type="GO" id="GO:0005829">
    <property type="term" value="C:cytosol"/>
    <property type="evidence" value="ECO:0007669"/>
    <property type="project" value="TreeGrafter"/>
</dbReference>
<dbReference type="GO" id="GO:0004455">
    <property type="term" value="F:ketol-acid reductoisomerase activity"/>
    <property type="evidence" value="ECO:0007669"/>
    <property type="project" value="UniProtKB-UniRule"/>
</dbReference>
<dbReference type="GO" id="GO:0000287">
    <property type="term" value="F:magnesium ion binding"/>
    <property type="evidence" value="ECO:0007669"/>
    <property type="project" value="UniProtKB-UniRule"/>
</dbReference>
<dbReference type="GO" id="GO:0050661">
    <property type="term" value="F:NADP binding"/>
    <property type="evidence" value="ECO:0007669"/>
    <property type="project" value="InterPro"/>
</dbReference>
<dbReference type="GO" id="GO:0009097">
    <property type="term" value="P:isoleucine biosynthetic process"/>
    <property type="evidence" value="ECO:0007669"/>
    <property type="project" value="UniProtKB-UniRule"/>
</dbReference>
<dbReference type="GO" id="GO:0009099">
    <property type="term" value="P:L-valine biosynthetic process"/>
    <property type="evidence" value="ECO:0007669"/>
    <property type="project" value="UniProtKB-UniRule"/>
</dbReference>
<dbReference type="Gene3D" id="6.10.240.10">
    <property type="match status" value="1"/>
</dbReference>
<dbReference type="Gene3D" id="3.40.50.720">
    <property type="entry name" value="NAD(P)-binding Rossmann-like Domain"/>
    <property type="match status" value="1"/>
</dbReference>
<dbReference type="HAMAP" id="MF_00435">
    <property type="entry name" value="IlvC"/>
    <property type="match status" value="1"/>
</dbReference>
<dbReference type="InterPro" id="IPR008927">
    <property type="entry name" value="6-PGluconate_DH-like_C_sf"/>
</dbReference>
<dbReference type="InterPro" id="IPR013023">
    <property type="entry name" value="KARI"/>
</dbReference>
<dbReference type="InterPro" id="IPR000506">
    <property type="entry name" value="KARI_C"/>
</dbReference>
<dbReference type="InterPro" id="IPR013116">
    <property type="entry name" value="KARI_N"/>
</dbReference>
<dbReference type="InterPro" id="IPR014359">
    <property type="entry name" value="KARI_prok"/>
</dbReference>
<dbReference type="InterPro" id="IPR036291">
    <property type="entry name" value="NAD(P)-bd_dom_sf"/>
</dbReference>
<dbReference type="NCBIfam" id="TIGR00465">
    <property type="entry name" value="ilvC"/>
    <property type="match status" value="1"/>
</dbReference>
<dbReference type="NCBIfam" id="NF004017">
    <property type="entry name" value="PRK05479.1"/>
    <property type="match status" value="1"/>
</dbReference>
<dbReference type="PANTHER" id="PTHR21371">
    <property type="entry name" value="KETOL-ACID REDUCTOISOMERASE, MITOCHONDRIAL"/>
    <property type="match status" value="1"/>
</dbReference>
<dbReference type="PANTHER" id="PTHR21371:SF1">
    <property type="entry name" value="KETOL-ACID REDUCTOISOMERASE, MITOCHONDRIAL"/>
    <property type="match status" value="1"/>
</dbReference>
<dbReference type="Pfam" id="PF01450">
    <property type="entry name" value="KARI_C"/>
    <property type="match status" value="1"/>
</dbReference>
<dbReference type="Pfam" id="PF07991">
    <property type="entry name" value="KARI_N"/>
    <property type="match status" value="1"/>
</dbReference>
<dbReference type="PIRSF" id="PIRSF000116">
    <property type="entry name" value="IlvC_gammaproteo"/>
    <property type="match status" value="1"/>
</dbReference>
<dbReference type="SUPFAM" id="SSF48179">
    <property type="entry name" value="6-phosphogluconate dehydrogenase C-terminal domain-like"/>
    <property type="match status" value="1"/>
</dbReference>
<dbReference type="SUPFAM" id="SSF51735">
    <property type="entry name" value="NAD(P)-binding Rossmann-fold domains"/>
    <property type="match status" value="1"/>
</dbReference>
<dbReference type="PROSITE" id="PS51851">
    <property type="entry name" value="KARI_C"/>
    <property type="match status" value="1"/>
</dbReference>
<dbReference type="PROSITE" id="PS51850">
    <property type="entry name" value="KARI_N"/>
    <property type="match status" value="1"/>
</dbReference>
<proteinExistence type="inferred from homology"/>
<evidence type="ECO:0000255" key="1">
    <source>
        <dbReference type="HAMAP-Rule" id="MF_00435"/>
    </source>
</evidence>
<evidence type="ECO:0000255" key="2">
    <source>
        <dbReference type="PROSITE-ProRule" id="PRU01197"/>
    </source>
</evidence>
<evidence type="ECO:0000255" key="3">
    <source>
        <dbReference type="PROSITE-ProRule" id="PRU01198"/>
    </source>
</evidence>
<organism>
    <name type="scientific">Helicobacter pylori (strain J99 / ATCC 700824)</name>
    <name type="common">Campylobacter pylori J99</name>
    <dbReference type="NCBI Taxonomy" id="85963"/>
    <lineage>
        <taxon>Bacteria</taxon>
        <taxon>Pseudomonadati</taxon>
        <taxon>Campylobacterota</taxon>
        <taxon>Epsilonproteobacteria</taxon>
        <taxon>Campylobacterales</taxon>
        <taxon>Helicobacteraceae</taxon>
        <taxon>Helicobacter</taxon>
    </lineage>
</organism>
<sequence>MALPVYYDKDIDLGVIQSLQVGIIGYGVQGEAQALNLRDSKVKVRIGLYQGSLSVSKAKKEGFEVLGVKELVQQSDVIMALLPDELHKEVLEKEVIPFLKEGQIIGFAHGFSVHFNQVVLPKGVGAILVAPKGPGSALREEYLKNRGLYHLIAIEQESSIHNAKAVALSYAKAMGGGRMGVLETSFKEECESDLFGEQAVLCGGLEAIVRMGFETLIKAGYPEELAYFECVHEVKLVADLLHYKGVEGLRKHISNTAEFGAIKAREPMGNLLEKRMQKILKKIQNGAFAKDFLLEKSLNYPRLNTERKALKETKIEQIGEILRAPFNHKK</sequence>
<accession>Q9ZMA9</accession>
<reference key="1">
    <citation type="journal article" date="1999" name="Nature">
        <title>Genomic sequence comparison of two unrelated isolates of the human gastric pathogen Helicobacter pylori.</title>
        <authorList>
            <person name="Alm R.A."/>
            <person name="Ling L.-S.L."/>
            <person name="Moir D.T."/>
            <person name="King B.L."/>
            <person name="Brown E.D."/>
            <person name="Doig P.C."/>
            <person name="Smith D.R."/>
            <person name="Noonan B."/>
            <person name="Guild B.C."/>
            <person name="deJonge B.L."/>
            <person name="Carmel G."/>
            <person name="Tummino P.J."/>
            <person name="Caruso A."/>
            <person name="Uria-Nickelsen M."/>
            <person name="Mills D.M."/>
            <person name="Ives C."/>
            <person name="Gibson R."/>
            <person name="Merberg D."/>
            <person name="Mills S.D."/>
            <person name="Jiang Q."/>
            <person name="Taylor D.E."/>
            <person name="Vovis G.F."/>
            <person name="Trust T.J."/>
        </authorList>
    </citation>
    <scope>NUCLEOTIDE SEQUENCE [LARGE SCALE GENOMIC DNA]</scope>
    <source>
        <strain>J99 / ATCC 700824</strain>
    </source>
</reference>
<name>ILVC_HELPJ</name>
<feature type="chain" id="PRO_0000151317" description="Ketol-acid reductoisomerase (NADP(+))">
    <location>
        <begin position="1"/>
        <end position="330"/>
    </location>
</feature>
<feature type="domain" description="KARI N-terminal Rossmann" evidence="2">
    <location>
        <begin position="3"/>
        <end position="184"/>
    </location>
</feature>
<feature type="domain" description="KARI C-terminal knotted" evidence="3">
    <location>
        <begin position="185"/>
        <end position="329"/>
    </location>
</feature>
<feature type="active site" evidence="1">
    <location>
        <position position="109"/>
    </location>
</feature>
<feature type="binding site" evidence="1">
    <location>
        <begin position="26"/>
        <end position="29"/>
    </location>
    <ligand>
        <name>NADP(+)</name>
        <dbReference type="ChEBI" id="CHEBI:58349"/>
    </ligand>
</feature>
<feature type="binding site" evidence="1">
    <location>
        <position position="52"/>
    </location>
    <ligand>
        <name>NADP(+)</name>
        <dbReference type="ChEBI" id="CHEBI:58349"/>
    </ligand>
</feature>
<feature type="binding site" evidence="1">
    <location>
        <position position="54"/>
    </location>
    <ligand>
        <name>NADP(+)</name>
        <dbReference type="ChEBI" id="CHEBI:58349"/>
    </ligand>
</feature>
<feature type="binding site" evidence="1">
    <location>
        <position position="135"/>
    </location>
    <ligand>
        <name>NADP(+)</name>
        <dbReference type="ChEBI" id="CHEBI:58349"/>
    </ligand>
</feature>
<feature type="binding site" evidence="1">
    <location>
        <position position="193"/>
    </location>
    <ligand>
        <name>Mg(2+)</name>
        <dbReference type="ChEBI" id="CHEBI:18420"/>
        <label>1</label>
    </ligand>
</feature>
<feature type="binding site" evidence="1">
    <location>
        <position position="193"/>
    </location>
    <ligand>
        <name>Mg(2+)</name>
        <dbReference type="ChEBI" id="CHEBI:18420"/>
        <label>2</label>
    </ligand>
</feature>
<feature type="binding site" evidence="1">
    <location>
        <position position="197"/>
    </location>
    <ligand>
        <name>Mg(2+)</name>
        <dbReference type="ChEBI" id="CHEBI:18420"/>
        <label>1</label>
    </ligand>
</feature>
<feature type="binding site" evidence="1">
    <location>
        <position position="229"/>
    </location>
    <ligand>
        <name>Mg(2+)</name>
        <dbReference type="ChEBI" id="CHEBI:18420"/>
        <label>2</label>
    </ligand>
</feature>
<feature type="binding site" evidence="1">
    <location>
        <position position="233"/>
    </location>
    <ligand>
        <name>Mg(2+)</name>
        <dbReference type="ChEBI" id="CHEBI:18420"/>
        <label>2</label>
    </ligand>
</feature>
<feature type="binding site" evidence="1">
    <location>
        <position position="254"/>
    </location>
    <ligand>
        <name>substrate</name>
    </ligand>
</feature>
<comment type="function">
    <text evidence="1">Involved in the biosynthesis of branched-chain amino acids (BCAA). Catalyzes an alkyl-migration followed by a ketol-acid reduction of (S)-2-acetolactate (S2AL) to yield (R)-2,3-dihydroxy-isovalerate. In the isomerase reaction, S2AL is rearranged via a Mg-dependent methyl migration to produce 3-hydroxy-3-methyl-2-ketobutyrate (HMKB). In the reductase reaction, this 2-ketoacid undergoes a metal-dependent reduction by NADPH to yield (R)-2,3-dihydroxy-isovalerate.</text>
</comment>
<comment type="catalytic activity">
    <reaction evidence="1">
        <text>(2R)-2,3-dihydroxy-3-methylbutanoate + NADP(+) = (2S)-2-acetolactate + NADPH + H(+)</text>
        <dbReference type="Rhea" id="RHEA:22068"/>
        <dbReference type="ChEBI" id="CHEBI:15378"/>
        <dbReference type="ChEBI" id="CHEBI:49072"/>
        <dbReference type="ChEBI" id="CHEBI:57783"/>
        <dbReference type="ChEBI" id="CHEBI:58349"/>
        <dbReference type="ChEBI" id="CHEBI:58476"/>
        <dbReference type="EC" id="1.1.1.86"/>
    </reaction>
</comment>
<comment type="catalytic activity">
    <reaction evidence="1">
        <text>(2R,3R)-2,3-dihydroxy-3-methylpentanoate + NADP(+) = (S)-2-ethyl-2-hydroxy-3-oxobutanoate + NADPH + H(+)</text>
        <dbReference type="Rhea" id="RHEA:13493"/>
        <dbReference type="ChEBI" id="CHEBI:15378"/>
        <dbReference type="ChEBI" id="CHEBI:49256"/>
        <dbReference type="ChEBI" id="CHEBI:49258"/>
        <dbReference type="ChEBI" id="CHEBI:57783"/>
        <dbReference type="ChEBI" id="CHEBI:58349"/>
        <dbReference type="EC" id="1.1.1.86"/>
    </reaction>
</comment>
<comment type="cofactor">
    <cofactor evidence="1">
        <name>Mg(2+)</name>
        <dbReference type="ChEBI" id="CHEBI:18420"/>
    </cofactor>
    <text evidence="1">Binds 2 magnesium ions per subunit.</text>
</comment>
<comment type="pathway">
    <text evidence="1">Amino-acid biosynthesis; L-isoleucine biosynthesis; L-isoleucine from 2-oxobutanoate: step 2/4.</text>
</comment>
<comment type="pathway">
    <text evidence="1">Amino-acid biosynthesis; L-valine biosynthesis; L-valine from pyruvate: step 2/4.</text>
</comment>
<comment type="similarity">
    <text evidence="1">Belongs to the ketol-acid reductoisomerase family.</text>
</comment>
<keyword id="KW-0028">Amino-acid biosynthesis</keyword>
<keyword id="KW-0100">Branched-chain amino acid biosynthesis</keyword>
<keyword id="KW-0460">Magnesium</keyword>
<keyword id="KW-0479">Metal-binding</keyword>
<keyword id="KW-0521">NADP</keyword>
<keyword id="KW-0560">Oxidoreductase</keyword>
<gene>
    <name evidence="1" type="primary">ilvC</name>
    <name type="ordered locus">jhp_0313</name>
</gene>